<comment type="function">
    <text evidence="3 5">Catalyzes the dehydration of the S-form of NAD(P)HX at the expense of ATP, which is converted to ADP. Together with NAD(P)HX epimerase, which catalyzes the epimerization of the S- and R-forms, the enzyme allows the repair of both epimers of NAD(P)HX, a damaged form of NAD(P)H that is a result of enzymatic or heat-dependent hydration.</text>
</comment>
<comment type="catalytic activity">
    <reaction evidence="3 5">
        <text>(6S)-NADHX + ATP = ADP + phosphate + NADH + H(+)</text>
        <dbReference type="Rhea" id="RHEA:19017"/>
        <dbReference type="ChEBI" id="CHEBI:15378"/>
        <dbReference type="ChEBI" id="CHEBI:30616"/>
        <dbReference type="ChEBI" id="CHEBI:43474"/>
        <dbReference type="ChEBI" id="CHEBI:57945"/>
        <dbReference type="ChEBI" id="CHEBI:64074"/>
        <dbReference type="ChEBI" id="CHEBI:456216"/>
        <dbReference type="EC" id="4.2.1.93"/>
    </reaction>
</comment>
<comment type="catalytic activity">
    <reaction evidence="5">
        <text>(6S)-NADPHX + ATP = ADP + phosphate + NADPH + H(+)</text>
        <dbReference type="Rhea" id="RHEA:32231"/>
        <dbReference type="ChEBI" id="CHEBI:15378"/>
        <dbReference type="ChEBI" id="CHEBI:30616"/>
        <dbReference type="ChEBI" id="CHEBI:43474"/>
        <dbReference type="ChEBI" id="CHEBI:57783"/>
        <dbReference type="ChEBI" id="CHEBI:64076"/>
        <dbReference type="ChEBI" id="CHEBI:456216"/>
        <dbReference type="EC" id="4.2.1.93"/>
    </reaction>
</comment>
<comment type="cofactor">
    <cofactor evidence="3">
        <name>Mg(2+)</name>
        <dbReference type="ChEBI" id="CHEBI:18420"/>
    </cofactor>
</comment>
<comment type="biophysicochemical properties">
    <kinetics>
        <KM evidence="5">8.62 uM for (6S)-NADHX</KM>
        <Vmax evidence="5">8.77 umol/min/mg enzyme with (6S)-NADHX as substrate</Vmax>
    </kinetics>
</comment>
<comment type="interaction">
    <interactant intactId="EBI-8650724">
        <id>Q8IW45</id>
    </interactant>
    <interactant intactId="EBI-750700">
        <id>Q8N9N8</id>
        <label>EIF1AD</label>
    </interactant>
    <organismsDiffer>false</organismsDiffer>
    <experiments>3</experiments>
</comment>
<comment type="interaction">
    <interactant intactId="EBI-8650724">
        <id>Q8IW45</id>
    </interactant>
    <interactant intactId="EBI-948001">
        <id>Q15323</id>
        <label>KRT31</label>
    </interactant>
    <organismsDiffer>false</organismsDiffer>
    <experiments>3</experiments>
</comment>
<comment type="interaction">
    <interactant intactId="EBI-8650724">
        <id>Q8IW45</id>
    </interactant>
    <interactant intactId="EBI-1047093">
        <id>O76011</id>
        <label>KRT34</label>
    </interactant>
    <organismsDiffer>false</organismsDiffer>
    <experiments>3</experiments>
</comment>
<comment type="interaction">
    <interactant intactId="EBI-8650724">
        <id>Q8IW45</id>
    </interactant>
    <interactant intactId="EBI-11749135">
        <id>Q8IUG1</id>
        <label>KRTAP1-3</label>
    </interactant>
    <organismsDiffer>false</organismsDiffer>
    <experiments>3</experiments>
</comment>
<comment type="interaction">
    <interactant intactId="EBI-8650724">
        <id>Q8IW45</id>
    </interactant>
    <interactant intactId="EBI-12012928">
        <id>P60371</id>
        <label>KRTAP10-6</label>
    </interactant>
    <organismsDiffer>false</organismsDiffer>
    <experiments>3</experiments>
</comment>
<comment type="interaction">
    <interactant intactId="EBI-8650724">
        <id>Q8IW45</id>
    </interactant>
    <interactant intactId="EBI-10172290">
        <id>P60409</id>
        <label>KRTAP10-7</label>
    </interactant>
    <organismsDiffer>false</organismsDiffer>
    <experiments>6</experiments>
</comment>
<comment type="interaction">
    <interactant intactId="EBI-8650724">
        <id>Q8IW45</id>
    </interactant>
    <interactant intactId="EBI-10171774">
        <id>P60410</id>
        <label>KRTAP10-8</label>
    </interactant>
    <organismsDiffer>false</organismsDiffer>
    <experiments>6</experiments>
</comment>
<comment type="interaction">
    <interactant intactId="EBI-8650724">
        <id>Q8IW45</id>
    </interactant>
    <interactant intactId="EBI-10172052">
        <id>P60411</id>
        <label>KRTAP10-9</label>
    </interactant>
    <organismsDiffer>false</organismsDiffer>
    <experiments>3</experiments>
</comment>
<comment type="interaction">
    <interactant intactId="EBI-8650724">
        <id>Q8IW45</id>
    </interactant>
    <interactant intactId="EBI-3958099">
        <id>P26371</id>
        <label>KRTAP5-9</label>
    </interactant>
    <organismsDiffer>false</organismsDiffer>
    <experiments>3</experiments>
</comment>
<comment type="interaction">
    <interactant intactId="EBI-8650724">
        <id>Q8IW45</id>
    </interactant>
    <interactant intactId="EBI-945833">
        <id>Q7Z3S9</id>
        <label>NOTCH2NLA</label>
    </interactant>
    <organismsDiffer>false</organismsDiffer>
    <experiments>3</experiments>
</comment>
<comment type="interaction">
    <interactant intactId="EBI-8650724">
        <id>Q8IW45</id>
    </interactant>
    <interactant intactId="EBI-347996">
        <id>O43765</id>
        <label>SGTA</label>
    </interactant>
    <organismsDiffer>false</organismsDiffer>
    <experiments>7</experiments>
</comment>
<comment type="interaction">
    <interactant intactId="EBI-8650724">
        <id>Q8IW45</id>
    </interactant>
    <interactant intactId="EBI-744081">
        <id>Q96EQ0</id>
        <label>SGTB</label>
    </interactant>
    <organismsDiffer>false</organismsDiffer>
    <experiments>3</experiments>
</comment>
<comment type="interaction">
    <interactant intactId="EBI-8650724">
        <id>Q8IW45</id>
    </interactant>
    <interactant intactId="EBI-741480">
        <id>Q9UMX0</id>
        <label>UBQLN1</label>
    </interactant>
    <organismsDiffer>false</organismsDiffer>
    <experiments>3</experiments>
</comment>
<comment type="interaction">
    <interactant intactId="EBI-8650724">
        <id>Q8IW45</id>
    </interactant>
    <interactant intactId="EBI-10173939">
        <id>Q9UMX0-2</id>
        <label>UBQLN1</label>
    </interactant>
    <organismsDiffer>false</organismsDiffer>
    <experiments>3</experiments>
</comment>
<comment type="interaction">
    <interactant intactId="EBI-8650724">
        <id>Q8IW45</id>
    </interactant>
    <interactant intactId="EBI-947187">
        <id>Q9UHD9</id>
        <label>UBQLN2</label>
    </interactant>
    <organismsDiffer>false</organismsDiffer>
    <experiments>3</experiments>
</comment>
<comment type="subcellular location">
    <subcellularLocation>
        <location evidence="3">Mitochondrion</location>
    </subcellularLocation>
</comment>
<comment type="alternative products">
    <event type="alternative splicing"/>
    <isoform>
        <id>Q8IW45-1</id>
        <name>1</name>
        <sequence type="displayed"/>
    </isoform>
    <isoform>
        <id>Q8IW45-2</id>
        <name>2</name>
        <sequence type="described" ref="VSP_033830"/>
    </isoform>
    <isoform>
        <id>Q8IW45-3</id>
        <name>3</name>
        <sequence type="described" ref="VSP_033829"/>
    </isoform>
    <isoform>
        <id>Q8IW45-4</id>
        <name>4</name>
        <sequence type="described" ref="VSP_042012"/>
    </isoform>
</comment>
<comment type="disease" evidence="5">
    <disease id="DI-05478">
        <name>Encephalopathy, progressive, early-onset, with brain edema and/or leukoencephalopathy, 2</name>
        <acronym>PEBEL2</acronym>
        <description>An autosomal recessive severe neurometabolic disorder characterized by severe leukoencephalopathy usually associated with a trivial febrile illness. Affected infants tend to show normal early development followed by acute psychomotor regression with ataxia, hypotonia, respiratory insufficiency, and seizures. Disease course is rapidly progressive, leading to coma, global brain atrophy, and death in the first years of life. Brain imaging shows multiple abnormalities, including brain edema and signal abnormalities in the cortical and subcortical regions.</description>
        <dbReference type="MIM" id="618321"/>
    </disease>
    <text>The disease is caused by variants affecting the gene represented in this entry.</text>
</comment>
<comment type="miscellaneous">
    <text evidence="3">This protein may be expected to contain an N-terminal transit peptide but none has been predicted.</text>
</comment>
<comment type="similarity">
    <text evidence="3">Belongs to the NnrD/CARKD family.</text>
</comment>
<protein>
    <recommendedName>
        <fullName evidence="3">ATP-dependent (S)-NAD(P)H-hydrate dehydratase</fullName>
        <ecNumber evidence="3 5">4.2.1.93</ecNumber>
    </recommendedName>
    <alternativeName>
        <fullName evidence="3">ATP-dependent NAD(P)HX dehydratase</fullName>
    </alternativeName>
    <alternativeName>
        <fullName evidence="3">Carbohydrate kinase domain-containing protein</fullName>
    </alternativeName>
    <alternativeName>
        <fullName evidence="8">NAD(P)HX dehydratase</fullName>
    </alternativeName>
</protein>
<gene>
    <name evidence="8" type="primary">NAXD</name>
    <name evidence="3" type="synonym">CARKD</name>
</gene>
<dbReference type="EC" id="4.2.1.93" evidence="3 5"/>
<dbReference type="EMBL" id="AK001631">
    <property type="protein sequence ID" value="BAA91797.1"/>
    <property type="molecule type" value="mRNA"/>
</dbReference>
<dbReference type="EMBL" id="AK024260">
    <property type="protein sequence ID" value="BAB14863.1"/>
    <property type="molecule type" value="mRNA"/>
</dbReference>
<dbReference type="EMBL" id="AK302117">
    <property type="protein sequence ID" value="BAG63496.1"/>
    <property type="molecule type" value="mRNA"/>
</dbReference>
<dbReference type="EMBL" id="AL139385">
    <property type="status" value="NOT_ANNOTATED_CDS"/>
    <property type="molecule type" value="Genomic_DNA"/>
</dbReference>
<dbReference type="EMBL" id="CH471085">
    <property type="protein sequence ID" value="EAX09121.1"/>
    <property type="molecule type" value="Genomic_DNA"/>
</dbReference>
<dbReference type="EMBL" id="CH471085">
    <property type="protein sequence ID" value="EAX09125.1"/>
    <property type="molecule type" value="Genomic_DNA"/>
</dbReference>
<dbReference type="EMBL" id="BC041028">
    <property type="protein sequence ID" value="AAH41028.1"/>
    <property type="molecule type" value="mRNA"/>
</dbReference>
<dbReference type="CCDS" id="CCDS55903.1">
    <molecule id="Q8IW45-4"/>
</dbReference>
<dbReference type="CCDS" id="CCDS91836.1">
    <molecule id="Q8IW45-1"/>
</dbReference>
<dbReference type="CCDS" id="CCDS9513.1">
    <molecule id="Q8IW45-2"/>
</dbReference>
<dbReference type="RefSeq" id="NP_001229810.1">
    <molecule id="Q8IW45-1"/>
    <property type="nucleotide sequence ID" value="NM_001242881.2"/>
</dbReference>
<dbReference type="RefSeq" id="NP_001229811.1">
    <property type="nucleotide sequence ID" value="NM_001242882.1"/>
</dbReference>
<dbReference type="RefSeq" id="NP_001229812.1">
    <molecule id="Q8IW45-4"/>
    <property type="nucleotide sequence ID" value="NM_001242883.2"/>
</dbReference>
<dbReference type="RefSeq" id="NP_060680.2">
    <molecule id="Q8IW45-2"/>
    <property type="nucleotide sequence ID" value="NM_018210.4"/>
</dbReference>
<dbReference type="SMR" id="Q8IW45"/>
<dbReference type="BioGRID" id="120857">
    <property type="interactions" value="77"/>
</dbReference>
<dbReference type="FunCoup" id="Q8IW45">
    <property type="interactions" value="338"/>
</dbReference>
<dbReference type="IntAct" id="Q8IW45">
    <property type="interactions" value="50"/>
</dbReference>
<dbReference type="MINT" id="Q8IW45"/>
<dbReference type="STRING" id="9606.ENSP00000311984"/>
<dbReference type="GlyCosmos" id="Q8IW45">
    <property type="glycosylation" value="2 sites, No reported glycans"/>
</dbReference>
<dbReference type="GlyGen" id="Q8IW45">
    <property type="glycosylation" value="2 sites, 4 N-linked glycans (1 site)"/>
</dbReference>
<dbReference type="iPTMnet" id="Q8IW45"/>
<dbReference type="MetOSite" id="Q8IW45"/>
<dbReference type="PhosphoSitePlus" id="Q8IW45"/>
<dbReference type="SwissPalm" id="Q8IW45"/>
<dbReference type="BioMuta" id="NAXD"/>
<dbReference type="DMDM" id="74728128"/>
<dbReference type="jPOST" id="Q8IW45"/>
<dbReference type="MassIVE" id="Q8IW45"/>
<dbReference type="PaxDb" id="9606-ENSP00000311984"/>
<dbReference type="PeptideAtlas" id="Q8IW45"/>
<dbReference type="ProteomicsDB" id="70807">
    <molecule id="Q8IW45-1"/>
</dbReference>
<dbReference type="ProteomicsDB" id="70808">
    <molecule id="Q8IW45-2"/>
</dbReference>
<dbReference type="ProteomicsDB" id="70809">
    <molecule id="Q8IW45-3"/>
</dbReference>
<dbReference type="ProteomicsDB" id="70810">
    <molecule id="Q8IW45-4"/>
</dbReference>
<dbReference type="Pumba" id="Q8IW45"/>
<dbReference type="Antibodypedia" id="2137">
    <property type="antibodies" value="62 antibodies from 15 providers"/>
</dbReference>
<dbReference type="DNASU" id="55739"/>
<dbReference type="Ensembl" id="ENST00000309957.3">
    <molecule id="Q8IW45-2"/>
    <property type="protein sequence ID" value="ENSP00000311984.2"/>
    <property type="gene ID" value="ENSG00000213995.12"/>
</dbReference>
<dbReference type="Ensembl" id="ENST00000424185.7">
    <molecule id="Q8IW45-4"/>
    <property type="protein sequence ID" value="ENSP00000413191.2"/>
    <property type="gene ID" value="ENSG00000213995.12"/>
</dbReference>
<dbReference type="Ensembl" id="ENST00000680505.1">
    <molecule id="Q8IW45-1"/>
    <property type="protein sequence ID" value="ENSP00000504986.1"/>
    <property type="gene ID" value="ENSG00000213995.12"/>
</dbReference>
<dbReference type="GeneID" id="55739"/>
<dbReference type="KEGG" id="hsa:55739"/>
<dbReference type="UCSC" id="uc001vrc.4">
    <molecule id="Q8IW45-1"/>
    <property type="organism name" value="human"/>
</dbReference>
<dbReference type="AGR" id="HGNC:25576"/>
<dbReference type="CTD" id="55739"/>
<dbReference type="DisGeNET" id="55739"/>
<dbReference type="GeneCards" id="NAXD"/>
<dbReference type="HGNC" id="HGNC:25576">
    <property type="gene designation" value="NAXD"/>
</dbReference>
<dbReference type="HPA" id="ENSG00000213995">
    <property type="expression patterns" value="Low tissue specificity"/>
</dbReference>
<dbReference type="MalaCards" id="NAXD"/>
<dbReference type="MIM" id="615910">
    <property type="type" value="gene"/>
</dbReference>
<dbReference type="MIM" id="618321">
    <property type="type" value="phenotype"/>
</dbReference>
<dbReference type="neXtProt" id="NX_Q8IW45"/>
<dbReference type="OpenTargets" id="ENSG00000213995"/>
<dbReference type="Orphanet" id="555402">
    <property type="disease" value="NAD(P)HX dehydratase deficiency"/>
</dbReference>
<dbReference type="PharmGKB" id="PA164717652"/>
<dbReference type="VEuPathDB" id="HostDB:ENSG00000213995"/>
<dbReference type="eggNOG" id="KOG3974">
    <property type="taxonomic scope" value="Eukaryota"/>
</dbReference>
<dbReference type="GeneTree" id="ENSGT00390000000917"/>
<dbReference type="HOGENOM" id="CLU_030651_0_1_1"/>
<dbReference type="InParanoid" id="Q8IW45"/>
<dbReference type="OMA" id="WRAAYHN"/>
<dbReference type="OrthoDB" id="8110916at2759"/>
<dbReference type="PAN-GO" id="Q8IW45">
    <property type="GO annotations" value="2 GO annotations based on evolutionary models"/>
</dbReference>
<dbReference type="PhylomeDB" id="Q8IW45"/>
<dbReference type="TreeFam" id="TF300116"/>
<dbReference type="BioCyc" id="MetaCyc:ENSG00000153481-MONOMER"/>
<dbReference type="BRENDA" id="4.2.1.93">
    <property type="organism ID" value="2681"/>
</dbReference>
<dbReference type="PathwayCommons" id="Q8IW45"/>
<dbReference type="Reactome" id="R-HSA-197264">
    <property type="pathway name" value="Nicotinamide salvaging"/>
</dbReference>
<dbReference type="SABIO-RK" id="Q8IW45"/>
<dbReference type="SignaLink" id="Q8IW45"/>
<dbReference type="BioGRID-ORCS" id="55739">
    <property type="hits" value="16 hits in 1151 CRISPR screens"/>
</dbReference>
<dbReference type="ChiTaRS" id="NAXD">
    <property type="organism name" value="human"/>
</dbReference>
<dbReference type="GeneWiki" id="CARKD"/>
<dbReference type="GenomeRNAi" id="55739"/>
<dbReference type="Pharos" id="Q8IW45">
    <property type="development level" value="Tbio"/>
</dbReference>
<dbReference type="PRO" id="PR:Q8IW45"/>
<dbReference type="Proteomes" id="UP000005640">
    <property type="component" value="Chromosome 13"/>
</dbReference>
<dbReference type="RNAct" id="Q8IW45">
    <property type="molecule type" value="protein"/>
</dbReference>
<dbReference type="Bgee" id="ENSG00000213995">
    <property type="expression patterns" value="Expressed in cardia of stomach and 207 other cell types or tissues"/>
</dbReference>
<dbReference type="ExpressionAtlas" id="Q8IW45">
    <property type="expression patterns" value="baseline and differential"/>
</dbReference>
<dbReference type="GO" id="GO:0005759">
    <property type="term" value="C:mitochondrial matrix"/>
    <property type="evidence" value="ECO:0000304"/>
    <property type="project" value="Reactome"/>
</dbReference>
<dbReference type="GO" id="GO:0005739">
    <property type="term" value="C:mitochondrion"/>
    <property type="evidence" value="ECO:0006056"/>
    <property type="project" value="FlyBase"/>
</dbReference>
<dbReference type="GO" id="GO:0005524">
    <property type="term" value="F:ATP binding"/>
    <property type="evidence" value="ECO:0007669"/>
    <property type="project" value="UniProtKB-KW"/>
</dbReference>
<dbReference type="GO" id="GO:0047453">
    <property type="term" value="F:ATP-dependent NAD(P)H-hydrate dehydratase activity"/>
    <property type="evidence" value="ECO:0000315"/>
    <property type="project" value="UniProtKB"/>
</dbReference>
<dbReference type="GO" id="GO:0110051">
    <property type="term" value="P:metabolite repair"/>
    <property type="evidence" value="ECO:0000318"/>
    <property type="project" value="GO_Central"/>
</dbReference>
<dbReference type="GO" id="GO:0046496">
    <property type="term" value="P:nicotinamide nucleotide metabolic process"/>
    <property type="evidence" value="ECO:0007669"/>
    <property type="project" value="UniProtKB-UniRule"/>
</dbReference>
<dbReference type="CDD" id="cd01171">
    <property type="entry name" value="YXKO-related"/>
    <property type="match status" value="1"/>
</dbReference>
<dbReference type="FunFam" id="3.40.1190.20:FF:000013">
    <property type="entry name" value="ATP-dependent (S)-NAD(P)H-hydrate dehydratase"/>
    <property type="match status" value="1"/>
</dbReference>
<dbReference type="Gene3D" id="3.40.1190.20">
    <property type="match status" value="1"/>
</dbReference>
<dbReference type="HAMAP" id="MF_01965">
    <property type="entry name" value="NADHX_dehydratase"/>
    <property type="match status" value="1"/>
</dbReference>
<dbReference type="InterPro" id="IPR000631">
    <property type="entry name" value="CARKD"/>
</dbReference>
<dbReference type="InterPro" id="IPR029056">
    <property type="entry name" value="Ribokinase-like"/>
</dbReference>
<dbReference type="NCBIfam" id="TIGR00196">
    <property type="entry name" value="yjeF_cterm"/>
    <property type="match status" value="1"/>
</dbReference>
<dbReference type="PANTHER" id="PTHR12592:SF0">
    <property type="entry name" value="ATP-DEPENDENT (S)-NAD(P)H-HYDRATE DEHYDRATASE"/>
    <property type="match status" value="1"/>
</dbReference>
<dbReference type="PANTHER" id="PTHR12592">
    <property type="entry name" value="ATP-DEPENDENT (S)-NAD(P)H-HYDRATE DEHYDRATASE FAMILY MEMBER"/>
    <property type="match status" value="1"/>
</dbReference>
<dbReference type="Pfam" id="PF01256">
    <property type="entry name" value="Carb_kinase"/>
    <property type="match status" value="1"/>
</dbReference>
<dbReference type="SUPFAM" id="SSF53613">
    <property type="entry name" value="Ribokinase-like"/>
    <property type="match status" value="1"/>
</dbReference>
<dbReference type="PROSITE" id="PS51383">
    <property type="entry name" value="YJEF_C_3"/>
    <property type="match status" value="1"/>
</dbReference>
<evidence type="ECO:0000250" key="1">
    <source>
        <dbReference type="UniProtKB" id="Q9CZ42"/>
    </source>
</evidence>
<evidence type="ECO:0000255" key="2"/>
<evidence type="ECO:0000255" key="3">
    <source>
        <dbReference type="HAMAP-Rule" id="MF_03157"/>
    </source>
</evidence>
<evidence type="ECO:0000269" key="4">
    <source>
    </source>
</evidence>
<evidence type="ECO:0000269" key="5">
    <source>
    </source>
</evidence>
<evidence type="ECO:0000303" key="6">
    <source>
    </source>
</evidence>
<evidence type="ECO:0000305" key="7"/>
<evidence type="ECO:0000312" key="8">
    <source>
        <dbReference type="HGNC" id="HGNC:25576"/>
    </source>
</evidence>
<organism>
    <name type="scientific">Homo sapiens</name>
    <name type="common">Human</name>
    <dbReference type="NCBI Taxonomy" id="9606"/>
    <lineage>
        <taxon>Eukaryota</taxon>
        <taxon>Metazoa</taxon>
        <taxon>Chordata</taxon>
        <taxon>Craniata</taxon>
        <taxon>Vertebrata</taxon>
        <taxon>Euteleostomi</taxon>
        <taxon>Mammalia</taxon>
        <taxon>Eutheria</taxon>
        <taxon>Euarchontoglires</taxon>
        <taxon>Primates</taxon>
        <taxon>Haplorrhini</taxon>
        <taxon>Catarrhini</taxon>
        <taxon>Hominidae</taxon>
        <taxon>Homo</taxon>
    </lineage>
</organism>
<accession>Q8IW45</accession>
<accession>B4DXT4</accession>
<accession>Q5T9X3</accession>
<accession>Q9H7W1</accession>
<accession>Q9NVF5</accession>
<feature type="chain" id="PRO_0000337021" description="ATP-dependent (S)-NAD(P)H-hydrate dehydratase">
    <location>
        <begin position="1"/>
        <end position="347"/>
    </location>
</feature>
<feature type="domain" description="YjeF C-terminal" evidence="3">
    <location>
        <begin position="53"/>
        <end position="344"/>
    </location>
</feature>
<feature type="binding site" evidence="3">
    <location>
        <position position="153"/>
    </location>
    <ligand>
        <name>(6S)-NADPHX</name>
        <dbReference type="ChEBI" id="CHEBI:64076"/>
    </ligand>
</feature>
<feature type="binding site" evidence="3">
    <location>
        <begin position="206"/>
        <end position="212"/>
    </location>
    <ligand>
        <name>(6S)-NADPHX</name>
        <dbReference type="ChEBI" id="CHEBI:64076"/>
    </ligand>
</feature>
<feature type="binding site" evidence="3">
    <location>
        <begin position="246"/>
        <end position="250"/>
    </location>
    <ligand>
        <name>ATP</name>
        <dbReference type="ChEBI" id="CHEBI:30616"/>
    </ligand>
</feature>
<feature type="binding site" evidence="3">
    <location>
        <begin position="265"/>
        <end position="274"/>
    </location>
    <ligand>
        <name>ATP</name>
        <dbReference type="ChEBI" id="CHEBI:30616"/>
    </ligand>
</feature>
<feature type="binding site" evidence="3">
    <location>
        <position position="275"/>
    </location>
    <ligand>
        <name>(6S)-NADPHX</name>
        <dbReference type="ChEBI" id="CHEBI:64076"/>
    </ligand>
</feature>
<feature type="modified residue" description="Phosphotyrosine" evidence="1">
    <location>
        <position position="85"/>
    </location>
</feature>
<feature type="glycosylation site" description="N-linked (GlcNAc...) asparagine" evidence="4">
    <location>
        <position position="240"/>
    </location>
</feature>
<feature type="glycosylation site" description="N-linked (GlcNAc...) asparagine" evidence="2">
    <location>
        <position position="297"/>
    </location>
</feature>
<feature type="splice variant" id="VSP_033829" description="In isoform 3." evidence="6">
    <location>
        <begin position="1"/>
        <end position="221"/>
    </location>
</feature>
<feature type="splice variant" id="VSP_042012" description="In isoform 4." evidence="6">
    <original>MVTRAGAGTAVAGAVVVALLSAALALYGPPLDAVLERAFSLRKAHSIKDMENTLQLVRNIIPPLSSTKHKGQDGRIGVVGGCQEYTGAPYFAAISALKVGADLSHVFCASAAAPVIKAYSPELIVHPVL</original>
    <variation>MLPDGPGSSLWGNPGLQTS</variation>
    <location>
        <begin position="1"/>
        <end position="129"/>
    </location>
</feature>
<feature type="splice variant" id="VSP_033830" description="In isoform 2." evidence="6">
    <original>SSPLLVAAFGACSLTRQCNHQAFQKHGRSTTTSDMIAEVGAAFSKLFET</original>
    <variation>GISDLKLTIWGPEIETGVKTRAQGSCGPRTTTPTSPHLLLSPSPQVQPSPGGRVWRLLSHQAVQPPSLPEARSLHHHLRHDRRGGGRLQQAL</variation>
    <location>
        <begin position="299"/>
        <end position="347"/>
    </location>
</feature>
<feature type="sequence variant" id="VAR_082224" description="In PEBEL2; decreased reaction kinetics for ATP-dependent NAD(P)H-hydrate dehydratase activity; decreased affinity for (6S)-NADHX; changed ATP-dependent NAD(P)H-hydrate dehydratase activity; thermostability assays show that activity is lost at temperatures above 30 degrees Celsius; dbSNP:rs1566614549." evidence="5">
    <original>G</original>
    <variation>S</variation>
    <location>
        <position position="81"/>
    </location>
</feature>
<feature type="sequence variant" id="VAR_043564" description="In dbSNP:rs3742191.">
    <original>K</original>
    <variation>E</variation>
    <location>
        <position position="140"/>
    </location>
</feature>
<feature type="sequence variant" id="VAR_043565" description="In dbSNP:rs3742192.">
    <original>V</original>
    <variation>I</variation>
    <location>
        <position position="149"/>
    </location>
</feature>
<feature type="sequence variant" id="VAR_043566" description="In dbSNP:rs1044112.">
    <original>P</original>
    <variation>T</variation>
    <location>
        <position position="152"/>
    </location>
</feature>
<feature type="sequence variant" id="VAR_082225" description="In PEBEL2; decreased reaction kinetics for ATP-dependent NAD(P)H-hydrate dehydratase activity; decreased affinity for (6S)-NADHX; changed ATP-dependent NAD(P)H-hydrate dehydratase activity; thermostability assays show that activity is lost at temperatures above 30 degrees Celsius; dbSNP:rs767778853." evidence="5">
    <original>R</original>
    <variation>C</variation>
    <location>
        <position position="326"/>
    </location>
</feature>
<feature type="sequence conflict" description="In Ref. 1; BAA91797." evidence="7" ref="1">
    <original>N</original>
    <variation>D</variation>
    <location>
        <position position="206"/>
    </location>
</feature>
<feature type="sequence conflict" description="In Ref. 1; BAB14863." evidence="7" ref="1">
    <original>S</original>
    <variation>P</variation>
    <location>
        <position position="253"/>
    </location>
</feature>
<keyword id="KW-0025">Alternative splicing</keyword>
<keyword id="KW-0067">ATP-binding</keyword>
<keyword id="KW-0225">Disease variant</keyword>
<keyword id="KW-0325">Glycoprotein</keyword>
<keyword id="KW-0456">Lyase</keyword>
<keyword id="KW-0496">Mitochondrion</keyword>
<keyword id="KW-0520">NAD</keyword>
<keyword id="KW-0521">NADP</keyword>
<keyword id="KW-0523">Neurodegeneration</keyword>
<keyword id="KW-0547">Nucleotide-binding</keyword>
<keyword id="KW-0597">Phosphoprotein</keyword>
<keyword id="KW-1267">Proteomics identification</keyword>
<keyword id="KW-1185">Reference proteome</keyword>
<proteinExistence type="evidence at protein level"/>
<sequence length="347" mass="36576">MVTRAGAGTAVAGAVVVALLSAALALYGPPLDAVLERAFSLRKAHSIKDMENTLQLVRNIIPPLSSTKHKGQDGRIGVVGGCQEYTGAPYFAAISALKVGADLSHVFCASAAAPVIKAYSPELIVHPVLDSPNAVHEVEKWLPRLHALVVGPGLGRDDALLRNVQGILEVSKARDIPVVIDADGLWLVAQQPALIHGYRKAVLTPNHVEFSRLYDAVLRGPMDSDDSHGSVLRLSQALGNVTVVQKGERDILSNGQQVLVCSQEGSSRRCGGQGDLLSGSLGVLVHWALLAGPQKTNGSSPLLVAAFGACSLTRQCNHQAFQKHGRSTTTSDMIAEVGAAFSKLFET</sequence>
<reference key="1">
    <citation type="journal article" date="2004" name="Nat. Genet.">
        <title>Complete sequencing and characterization of 21,243 full-length human cDNAs.</title>
        <authorList>
            <person name="Ota T."/>
            <person name="Suzuki Y."/>
            <person name="Nishikawa T."/>
            <person name="Otsuki T."/>
            <person name="Sugiyama T."/>
            <person name="Irie R."/>
            <person name="Wakamatsu A."/>
            <person name="Hayashi K."/>
            <person name="Sato H."/>
            <person name="Nagai K."/>
            <person name="Kimura K."/>
            <person name="Makita H."/>
            <person name="Sekine M."/>
            <person name="Obayashi M."/>
            <person name="Nishi T."/>
            <person name="Shibahara T."/>
            <person name="Tanaka T."/>
            <person name="Ishii S."/>
            <person name="Yamamoto J."/>
            <person name="Saito K."/>
            <person name="Kawai Y."/>
            <person name="Isono Y."/>
            <person name="Nakamura Y."/>
            <person name="Nagahari K."/>
            <person name="Murakami K."/>
            <person name="Yasuda T."/>
            <person name="Iwayanagi T."/>
            <person name="Wagatsuma M."/>
            <person name="Shiratori A."/>
            <person name="Sudo H."/>
            <person name="Hosoiri T."/>
            <person name="Kaku Y."/>
            <person name="Kodaira H."/>
            <person name="Kondo H."/>
            <person name="Sugawara M."/>
            <person name="Takahashi M."/>
            <person name="Kanda K."/>
            <person name="Yokoi T."/>
            <person name="Furuya T."/>
            <person name="Kikkawa E."/>
            <person name="Omura Y."/>
            <person name="Abe K."/>
            <person name="Kamihara K."/>
            <person name="Katsuta N."/>
            <person name="Sato K."/>
            <person name="Tanikawa M."/>
            <person name="Yamazaki M."/>
            <person name="Ninomiya K."/>
            <person name="Ishibashi T."/>
            <person name="Yamashita H."/>
            <person name="Murakawa K."/>
            <person name="Fujimori K."/>
            <person name="Tanai H."/>
            <person name="Kimata M."/>
            <person name="Watanabe M."/>
            <person name="Hiraoka S."/>
            <person name="Chiba Y."/>
            <person name="Ishida S."/>
            <person name="Ono Y."/>
            <person name="Takiguchi S."/>
            <person name="Watanabe S."/>
            <person name="Yosida M."/>
            <person name="Hotuta T."/>
            <person name="Kusano J."/>
            <person name="Kanehori K."/>
            <person name="Takahashi-Fujii A."/>
            <person name="Hara H."/>
            <person name="Tanase T.-O."/>
            <person name="Nomura Y."/>
            <person name="Togiya S."/>
            <person name="Komai F."/>
            <person name="Hara R."/>
            <person name="Takeuchi K."/>
            <person name="Arita M."/>
            <person name="Imose N."/>
            <person name="Musashino K."/>
            <person name="Yuuki H."/>
            <person name="Oshima A."/>
            <person name="Sasaki N."/>
            <person name="Aotsuka S."/>
            <person name="Yoshikawa Y."/>
            <person name="Matsunawa H."/>
            <person name="Ichihara T."/>
            <person name="Shiohata N."/>
            <person name="Sano S."/>
            <person name="Moriya S."/>
            <person name="Momiyama H."/>
            <person name="Satoh N."/>
            <person name="Takami S."/>
            <person name="Terashima Y."/>
            <person name="Suzuki O."/>
            <person name="Nakagawa S."/>
            <person name="Senoh A."/>
            <person name="Mizoguchi H."/>
            <person name="Goto Y."/>
            <person name="Shimizu F."/>
            <person name="Wakebe H."/>
            <person name="Hishigaki H."/>
            <person name="Watanabe T."/>
            <person name="Sugiyama A."/>
            <person name="Takemoto M."/>
            <person name="Kawakami B."/>
            <person name="Yamazaki M."/>
            <person name="Watanabe K."/>
            <person name="Kumagai A."/>
            <person name="Itakura S."/>
            <person name="Fukuzumi Y."/>
            <person name="Fujimori Y."/>
            <person name="Komiyama M."/>
            <person name="Tashiro H."/>
            <person name="Tanigami A."/>
            <person name="Fujiwara T."/>
            <person name="Ono T."/>
            <person name="Yamada K."/>
            <person name="Fujii Y."/>
            <person name="Ozaki K."/>
            <person name="Hirao M."/>
            <person name="Ohmori Y."/>
            <person name="Kawabata A."/>
            <person name="Hikiji T."/>
            <person name="Kobatake N."/>
            <person name="Inagaki H."/>
            <person name="Ikema Y."/>
            <person name="Okamoto S."/>
            <person name="Okitani R."/>
            <person name="Kawakami T."/>
            <person name="Noguchi S."/>
            <person name="Itoh T."/>
            <person name="Shigeta K."/>
            <person name="Senba T."/>
            <person name="Matsumura K."/>
            <person name="Nakajima Y."/>
            <person name="Mizuno T."/>
            <person name="Morinaga M."/>
            <person name="Sasaki M."/>
            <person name="Togashi T."/>
            <person name="Oyama M."/>
            <person name="Hata H."/>
            <person name="Watanabe M."/>
            <person name="Komatsu T."/>
            <person name="Mizushima-Sugano J."/>
            <person name="Satoh T."/>
            <person name="Shirai Y."/>
            <person name="Takahashi Y."/>
            <person name="Nakagawa K."/>
            <person name="Okumura K."/>
            <person name="Nagase T."/>
            <person name="Nomura N."/>
            <person name="Kikuchi H."/>
            <person name="Masuho Y."/>
            <person name="Yamashita R."/>
            <person name="Nakai K."/>
            <person name="Yada T."/>
            <person name="Nakamura Y."/>
            <person name="Ohara O."/>
            <person name="Isogai T."/>
            <person name="Sugano S."/>
        </authorList>
    </citation>
    <scope>NUCLEOTIDE SEQUENCE [LARGE SCALE MRNA] (ISOFORMS 2; 3 AND 4)</scope>
    <source>
        <tissue>Testis</tissue>
    </source>
</reference>
<reference key="2">
    <citation type="journal article" date="2004" name="Nature">
        <title>The DNA sequence and analysis of human chromosome 13.</title>
        <authorList>
            <person name="Dunham A."/>
            <person name="Matthews L.H."/>
            <person name="Burton J."/>
            <person name="Ashurst J.L."/>
            <person name="Howe K.L."/>
            <person name="Ashcroft K.J."/>
            <person name="Beare D.M."/>
            <person name="Burford D.C."/>
            <person name="Hunt S.E."/>
            <person name="Griffiths-Jones S."/>
            <person name="Jones M.C."/>
            <person name="Keenan S.J."/>
            <person name="Oliver K."/>
            <person name="Scott C.E."/>
            <person name="Ainscough R."/>
            <person name="Almeida J.P."/>
            <person name="Ambrose K.D."/>
            <person name="Andrews D.T."/>
            <person name="Ashwell R.I.S."/>
            <person name="Babbage A.K."/>
            <person name="Bagguley C.L."/>
            <person name="Bailey J."/>
            <person name="Bannerjee R."/>
            <person name="Barlow K.F."/>
            <person name="Bates K."/>
            <person name="Beasley H."/>
            <person name="Bird C.P."/>
            <person name="Bray-Allen S."/>
            <person name="Brown A.J."/>
            <person name="Brown J.Y."/>
            <person name="Burrill W."/>
            <person name="Carder C."/>
            <person name="Carter N.P."/>
            <person name="Chapman J.C."/>
            <person name="Clamp M.E."/>
            <person name="Clark S.Y."/>
            <person name="Clarke G."/>
            <person name="Clee C.M."/>
            <person name="Clegg S.C."/>
            <person name="Cobley V."/>
            <person name="Collins J.E."/>
            <person name="Corby N."/>
            <person name="Coville G.J."/>
            <person name="Deloukas P."/>
            <person name="Dhami P."/>
            <person name="Dunham I."/>
            <person name="Dunn M."/>
            <person name="Earthrowl M.E."/>
            <person name="Ellington A.G."/>
            <person name="Faulkner L."/>
            <person name="Frankish A.G."/>
            <person name="Frankland J."/>
            <person name="French L."/>
            <person name="Garner P."/>
            <person name="Garnett J."/>
            <person name="Gilbert J.G.R."/>
            <person name="Gilson C.J."/>
            <person name="Ghori J."/>
            <person name="Grafham D.V."/>
            <person name="Gribble S.M."/>
            <person name="Griffiths C."/>
            <person name="Hall R.E."/>
            <person name="Hammond S."/>
            <person name="Harley J.L."/>
            <person name="Hart E.A."/>
            <person name="Heath P.D."/>
            <person name="Howden P.J."/>
            <person name="Huckle E.J."/>
            <person name="Hunt P.J."/>
            <person name="Hunt A.R."/>
            <person name="Johnson C."/>
            <person name="Johnson D."/>
            <person name="Kay M."/>
            <person name="Kimberley A.M."/>
            <person name="King A."/>
            <person name="Laird G.K."/>
            <person name="Langford C.J."/>
            <person name="Lawlor S."/>
            <person name="Leongamornlert D.A."/>
            <person name="Lloyd D.M."/>
            <person name="Lloyd C."/>
            <person name="Loveland J.E."/>
            <person name="Lovell J."/>
            <person name="Martin S."/>
            <person name="Mashreghi-Mohammadi M."/>
            <person name="McLaren S.J."/>
            <person name="McMurray A."/>
            <person name="Milne S."/>
            <person name="Moore M.J.F."/>
            <person name="Nickerson T."/>
            <person name="Palmer S.A."/>
            <person name="Pearce A.V."/>
            <person name="Peck A.I."/>
            <person name="Pelan S."/>
            <person name="Phillimore B."/>
            <person name="Porter K.M."/>
            <person name="Rice C.M."/>
            <person name="Searle S."/>
            <person name="Sehra H.K."/>
            <person name="Shownkeen R."/>
            <person name="Skuce C.D."/>
            <person name="Smith M."/>
            <person name="Steward C.A."/>
            <person name="Sycamore N."/>
            <person name="Tester J."/>
            <person name="Thomas D.W."/>
            <person name="Tracey A."/>
            <person name="Tromans A."/>
            <person name="Tubby B."/>
            <person name="Wall M."/>
            <person name="Wallis J.M."/>
            <person name="West A.P."/>
            <person name="Whitehead S.L."/>
            <person name="Willey D.L."/>
            <person name="Wilming L."/>
            <person name="Wray P.W."/>
            <person name="Wright M.W."/>
            <person name="Young L."/>
            <person name="Coulson A."/>
            <person name="Durbin R.M."/>
            <person name="Hubbard T."/>
            <person name="Sulston J.E."/>
            <person name="Beck S."/>
            <person name="Bentley D.R."/>
            <person name="Rogers J."/>
            <person name="Ross M.T."/>
        </authorList>
    </citation>
    <scope>NUCLEOTIDE SEQUENCE [LARGE SCALE GENOMIC DNA]</scope>
</reference>
<reference key="3">
    <citation type="submission" date="2005-07" db="EMBL/GenBank/DDBJ databases">
        <authorList>
            <person name="Mural R.J."/>
            <person name="Istrail S."/>
            <person name="Sutton G.G."/>
            <person name="Florea L."/>
            <person name="Halpern A.L."/>
            <person name="Mobarry C.M."/>
            <person name="Lippert R."/>
            <person name="Walenz B."/>
            <person name="Shatkay H."/>
            <person name="Dew I."/>
            <person name="Miller J.R."/>
            <person name="Flanigan M.J."/>
            <person name="Edwards N.J."/>
            <person name="Bolanos R."/>
            <person name="Fasulo D."/>
            <person name="Halldorsson B.V."/>
            <person name="Hannenhalli S."/>
            <person name="Turner R."/>
            <person name="Yooseph S."/>
            <person name="Lu F."/>
            <person name="Nusskern D.R."/>
            <person name="Shue B.C."/>
            <person name="Zheng X.H."/>
            <person name="Zhong F."/>
            <person name="Delcher A.L."/>
            <person name="Huson D.H."/>
            <person name="Kravitz S.A."/>
            <person name="Mouchard L."/>
            <person name="Reinert K."/>
            <person name="Remington K.A."/>
            <person name="Clark A.G."/>
            <person name="Waterman M.S."/>
            <person name="Eichler E.E."/>
            <person name="Adams M.D."/>
            <person name="Hunkapiller M.W."/>
            <person name="Myers E.W."/>
            <person name="Venter J.C."/>
        </authorList>
    </citation>
    <scope>NUCLEOTIDE SEQUENCE [LARGE SCALE GENOMIC DNA]</scope>
</reference>
<reference key="4">
    <citation type="journal article" date="2004" name="Genome Res.">
        <title>The status, quality, and expansion of the NIH full-length cDNA project: the Mammalian Gene Collection (MGC).</title>
        <authorList>
            <consortium name="The MGC Project Team"/>
        </authorList>
    </citation>
    <scope>NUCLEOTIDE SEQUENCE [LARGE SCALE MRNA] (ISOFORM 1)</scope>
    <source>
        <tissue>Brain</tissue>
    </source>
</reference>
<reference key="5">
    <citation type="journal article" date="2009" name="J. Proteome Res.">
        <title>Glycoproteomics analysis of human liver tissue by combination of multiple enzyme digestion and hydrazide chemistry.</title>
        <authorList>
            <person name="Chen R."/>
            <person name="Jiang X."/>
            <person name="Sun D."/>
            <person name="Han G."/>
            <person name="Wang F."/>
            <person name="Ye M."/>
            <person name="Wang L."/>
            <person name="Zou H."/>
        </authorList>
    </citation>
    <scope>GLYCOSYLATION [LARGE SCALE ANALYSIS] AT ASN-240</scope>
    <source>
        <tissue>Liver</tissue>
    </source>
</reference>
<reference key="6">
    <citation type="journal article" date="2014" name="J. Proteomics">
        <title>An enzyme assisted RP-RPLC approach for in-depth analysis of human liver phosphoproteome.</title>
        <authorList>
            <person name="Bian Y."/>
            <person name="Song C."/>
            <person name="Cheng K."/>
            <person name="Dong M."/>
            <person name="Wang F."/>
            <person name="Huang J."/>
            <person name="Sun D."/>
            <person name="Wang L."/>
            <person name="Ye M."/>
            <person name="Zou H."/>
        </authorList>
    </citation>
    <scope>IDENTIFICATION BY MASS SPECTROMETRY [LARGE SCALE ANALYSIS]</scope>
    <source>
        <tissue>Liver</tissue>
    </source>
</reference>
<reference key="7">
    <citation type="journal article" date="2019" name="Brain">
        <title>NAD(P)HX dehydratase (NAXD) deficiency: a novel neurodegenerative disorder exacerbated by febrile illnesses.</title>
        <authorList>
            <person name="Van Bergen N.J."/>
            <person name="Guo Y."/>
            <person name="Rankin J."/>
            <person name="Paczia N."/>
            <person name="Becker-Kettern J."/>
            <person name="Kremer L.S."/>
            <person name="Pyle A."/>
            <person name="Conrotte J.F."/>
            <person name="Ellaway C."/>
            <person name="Procopis P."/>
            <person name="Prelog K."/>
            <person name="Homfray T."/>
            <person name="Baptista J."/>
            <person name="Baple E."/>
            <person name="Wakeling M."/>
            <person name="Massey S."/>
            <person name="Kay D.P."/>
            <person name="Shukla A."/>
            <person name="Girisha K.M."/>
            <person name="Lewis L.E.S."/>
            <person name="Santra S."/>
            <person name="Power R."/>
            <person name="Daubeney P."/>
            <person name="Montoya J."/>
            <person name="Ruiz-Pesini E."/>
            <person name="Kovacs-Nagy R."/>
            <person name="Pritsch M."/>
            <person name="Ahting U."/>
            <person name="Thorburn D.R."/>
            <person name="Prokisch H."/>
            <person name="Taylor R.W."/>
            <person name="Christodoulou J."/>
            <person name="Linster C.L."/>
            <person name="Ellard S."/>
            <person name="Hakonarson H."/>
        </authorList>
    </citation>
    <scope>FUNCTION</scope>
    <scope>CATALYTIC ACTIVITY</scope>
    <scope>BIOPHYSICOCHEMICAL PROPERTIES</scope>
    <scope>INVOLVEMENT IN PEBEL2</scope>
    <scope>VARIANTS PEBEL2 SER-81 AND CYS-326</scope>
    <scope>CHARACTERIZATION OF VARIANTS PEBEL2 SER-81 AND CYS-326</scope>
</reference>
<name>NNRD_HUMAN</name>